<keyword id="KW-0067">ATP-binding</keyword>
<keyword id="KW-0997">Cell inner membrane</keyword>
<keyword id="KW-1003">Cell membrane</keyword>
<keyword id="KW-0472">Membrane</keyword>
<keyword id="KW-0547">Nucleotide-binding</keyword>
<keyword id="KW-1185">Reference proteome</keyword>
<keyword id="KW-0677">Repeat</keyword>
<keyword id="KW-0762">Sugar transport</keyword>
<keyword id="KW-1278">Translocase</keyword>
<keyword id="KW-0813">Transport</keyword>
<reference key="1">
    <citation type="journal article" date="2005" name="Nucleic Acids Res.">
        <title>Genomic blueprint of Hahella chejuensis, a marine microbe producing an algicidal agent.</title>
        <authorList>
            <person name="Jeong H."/>
            <person name="Yim J.H."/>
            <person name="Lee C."/>
            <person name="Choi S.-H."/>
            <person name="Park Y.K."/>
            <person name="Yoon S.H."/>
            <person name="Hur C.-G."/>
            <person name="Kang H.-Y."/>
            <person name="Kim D."/>
            <person name="Lee H.H."/>
            <person name="Park K.H."/>
            <person name="Park S.-H."/>
            <person name="Park H.-S."/>
            <person name="Lee H.K."/>
            <person name="Oh T.K."/>
            <person name="Kim J.F."/>
        </authorList>
    </citation>
    <scope>NUCLEOTIDE SEQUENCE [LARGE SCALE GENOMIC DNA]</scope>
    <source>
        <strain>KCTC 2396</strain>
    </source>
</reference>
<dbReference type="EC" id="7.5.2.7" evidence="1"/>
<dbReference type="EMBL" id="CP000155">
    <property type="protein sequence ID" value="ABC29275.1"/>
    <property type="molecule type" value="Genomic_DNA"/>
</dbReference>
<dbReference type="RefSeq" id="WP_011396344.1">
    <property type="nucleotide sequence ID" value="NC_007645.1"/>
</dbReference>
<dbReference type="SMR" id="Q2SJ99"/>
<dbReference type="STRING" id="349521.HCH_02469"/>
<dbReference type="KEGG" id="hch:HCH_02469"/>
<dbReference type="eggNOG" id="COG1129">
    <property type="taxonomic scope" value="Bacteria"/>
</dbReference>
<dbReference type="HOGENOM" id="CLU_000604_92_3_6"/>
<dbReference type="OrthoDB" id="9776369at2"/>
<dbReference type="Proteomes" id="UP000000238">
    <property type="component" value="Chromosome"/>
</dbReference>
<dbReference type="GO" id="GO:0005886">
    <property type="term" value="C:plasma membrane"/>
    <property type="evidence" value="ECO:0007669"/>
    <property type="project" value="UniProtKB-SubCell"/>
</dbReference>
<dbReference type="GO" id="GO:0015611">
    <property type="term" value="F:ABC-type D-ribose transporter activity"/>
    <property type="evidence" value="ECO:0007669"/>
    <property type="project" value="UniProtKB-EC"/>
</dbReference>
<dbReference type="GO" id="GO:0005524">
    <property type="term" value="F:ATP binding"/>
    <property type="evidence" value="ECO:0007669"/>
    <property type="project" value="UniProtKB-KW"/>
</dbReference>
<dbReference type="GO" id="GO:0016887">
    <property type="term" value="F:ATP hydrolysis activity"/>
    <property type="evidence" value="ECO:0007669"/>
    <property type="project" value="InterPro"/>
</dbReference>
<dbReference type="CDD" id="cd03216">
    <property type="entry name" value="ABC_Carb_Monos_I"/>
    <property type="match status" value="1"/>
</dbReference>
<dbReference type="CDD" id="cd03215">
    <property type="entry name" value="ABC_Carb_Monos_II"/>
    <property type="match status" value="1"/>
</dbReference>
<dbReference type="FunFam" id="3.40.50.300:FF:000127">
    <property type="entry name" value="Ribose import ATP-binding protein RbsA"/>
    <property type="match status" value="1"/>
</dbReference>
<dbReference type="Gene3D" id="3.40.50.300">
    <property type="entry name" value="P-loop containing nucleotide triphosphate hydrolases"/>
    <property type="match status" value="2"/>
</dbReference>
<dbReference type="InterPro" id="IPR003593">
    <property type="entry name" value="AAA+_ATPase"/>
</dbReference>
<dbReference type="InterPro" id="IPR050107">
    <property type="entry name" value="ABC_carbohydrate_import_ATPase"/>
</dbReference>
<dbReference type="InterPro" id="IPR003439">
    <property type="entry name" value="ABC_transporter-like_ATP-bd"/>
</dbReference>
<dbReference type="InterPro" id="IPR017871">
    <property type="entry name" value="ABC_transporter-like_CS"/>
</dbReference>
<dbReference type="InterPro" id="IPR027417">
    <property type="entry name" value="P-loop_NTPase"/>
</dbReference>
<dbReference type="PANTHER" id="PTHR43790">
    <property type="entry name" value="CARBOHYDRATE TRANSPORT ATP-BINDING PROTEIN MG119-RELATED"/>
    <property type="match status" value="1"/>
</dbReference>
<dbReference type="PANTHER" id="PTHR43790:SF3">
    <property type="entry name" value="D-ALLOSE IMPORT ATP-BINDING PROTEIN ALSA-RELATED"/>
    <property type="match status" value="1"/>
</dbReference>
<dbReference type="Pfam" id="PF00005">
    <property type="entry name" value="ABC_tran"/>
    <property type="match status" value="2"/>
</dbReference>
<dbReference type="SMART" id="SM00382">
    <property type="entry name" value="AAA"/>
    <property type="match status" value="2"/>
</dbReference>
<dbReference type="SUPFAM" id="SSF52540">
    <property type="entry name" value="P-loop containing nucleoside triphosphate hydrolases"/>
    <property type="match status" value="2"/>
</dbReference>
<dbReference type="PROSITE" id="PS00211">
    <property type="entry name" value="ABC_TRANSPORTER_1"/>
    <property type="match status" value="1"/>
</dbReference>
<dbReference type="PROSITE" id="PS50893">
    <property type="entry name" value="ABC_TRANSPORTER_2"/>
    <property type="match status" value="2"/>
</dbReference>
<dbReference type="PROSITE" id="PS51254">
    <property type="entry name" value="RBSA"/>
    <property type="match status" value="1"/>
</dbReference>
<protein>
    <recommendedName>
        <fullName evidence="1">Ribose import ATP-binding protein RbsA</fullName>
        <ecNumber evidence="1">7.5.2.7</ecNumber>
    </recommendedName>
</protein>
<comment type="function">
    <text evidence="1">Part of the ABC transporter complex RbsABC involved in ribose import. Responsible for energy coupling to the transport system.</text>
</comment>
<comment type="catalytic activity">
    <reaction evidence="1">
        <text>D-ribose(out) + ATP + H2O = D-ribose(in) + ADP + phosphate + H(+)</text>
        <dbReference type="Rhea" id="RHEA:29903"/>
        <dbReference type="ChEBI" id="CHEBI:15377"/>
        <dbReference type="ChEBI" id="CHEBI:15378"/>
        <dbReference type="ChEBI" id="CHEBI:30616"/>
        <dbReference type="ChEBI" id="CHEBI:43474"/>
        <dbReference type="ChEBI" id="CHEBI:47013"/>
        <dbReference type="ChEBI" id="CHEBI:456216"/>
        <dbReference type="EC" id="7.5.2.7"/>
    </reaction>
</comment>
<comment type="subunit">
    <text evidence="1">The complex is composed of an ATP-binding protein (RbsA), two transmembrane proteins (RbsC) and a solute-binding protein (RbsB).</text>
</comment>
<comment type="subcellular location">
    <subcellularLocation>
        <location evidence="1">Cell inner membrane</location>
        <topology evidence="1">Peripheral membrane protein</topology>
    </subcellularLocation>
</comment>
<comment type="similarity">
    <text evidence="1">Belongs to the ABC transporter superfamily. Ribose importer (TC 3.A.1.2.1) family.</text>
</comment>
<proteinExistence type="inferred from homology"/>
<sequence>MNSLLSLEHISKGFPGVRALNDISFELQSGEIHALLGENGAGKSTLMKILCGVYKQDAGRILIDGAPVDFRHYHDATDAGVGVIFQEFSLIPYLNAVENIFLGRELRNALGMLRKKDMRAQAEKICQRLDVNIDLDAPVDHLSVAEQQFVEIAKALSLDARILVLDEPTATLTPNEAEHLFRVMRELKAQGVGMVFISHHMEEIYEICDRITVLRDGEKIGDREVGEVAVDELLEMMVGRKISNSFPEKTPLRNDGDIVIDARAIQLHKNGPVNSFQVRKGEILGFAGLVGSGRTETALAMIGALPACRKEVSVEGEPAAMKTPAEALRRGIGLLPESRKKEGLILPFSIRENITLNNLAKVSGAASVIDRKRESEVAETLSAKVRVKAPDCETPVGNLSGGNQQKVVIARWLNNDCKVLIFDEPTRGIDVGAKTEIYRLMKQLTAQGVSIIMISSELPEVVGVSDRVAVFRQGSIVKILEGDAVNSNEIMRYATGGVKDE</sequence>
<evidence type="ECO:0000255" key="1">
    <source>
        <dbReference type="HAMAP-Rule" id="MF_01716"/>
    </source>
</evidence>
<accession>Q2SJ99</accession>
<gene>
    <name evidence="1" type="primary">rbsA</name>
    <name type="ordered locus">HCH_02469</name>
</gene>
<name>RBSA_HAHCH</name>
<feature type="chain" id="PRO_0000261070" description="Ribose import ATP-binding protein RbsA">
    <location>
        <begin position="1"/>
        <end position="501"/>
    </location>
</feature>
<feature type="domain" description="ABC transporter 1" evidence="1">
    <location>
        <begin position="5"/>
        <end position="241"/>
    </location>
</feature>
<feature type="domain" description="ABC transporter 2" evidence="1">
    <location>
        <begin position="252"/>
        <end position="498"/>
    </location>
</feature>
<feature type="binding site" evidence="1">
    <location>
        <begin position="37"/>
        <end position="44"/>
    </location>
    <ligand>
        <name>ATP</name>
        <dbReference type="ChEBI" id="CHEBI:30616"/>
    </ligand>
</feature>
<organism>
    <name type="scientific">Hahella chejuensis (strain KCTC 2396)</name>
    <dbReference type="NCBI Taxonomy" id="349521"/>
    <lineage>
        <taxon>Bacteria</taxon>
        <taxon>Pseudomonadati</taxon>
        <taxon>Pseudomonadota</taxon>
        <taxon>Gammaproteobacteria</taxon>
        <taxon>Oceanospirillales</taxon>
        <taxon>Hahellaceae</taxon>
        <taxon>Hahella</taxon>
    </lineage>
</organism>